<comment type="function">
    <text evidence="1">Catalyzes the thiamine diphosphate-dependent decarboxylation of 2-oxoglutarate and the subsequent addition of the resulting succinic semialdehyde-thiamine pyrophosphate anion to isochorismate to yield 2-succinyl-5-enolpyruvyl-6-hydroxy-3-cyclohexene-1-carboxylate (SEPHCHC).</text>
</comment>
<comment type="catalytic activity">
    <reaction evidence="1">
        <text>isochorismate + 2-oxoglutarate + H(+) = 5-enolpyruvoyl-6-hydroxy-2-succinyl-cyclohex-3-ene-1-carboxylate + CO2</text>
        <dbReference type="Rhea" id="RHEA:25593"/>
        <dbReference type="ChEBI" id="CHEBI:15378"/>
        <dbReference type="ChEBI" id="CHEBI:16526"/>
        <dbReference type="ChEBI" id="CHEBI:16810"/>
        <dbReference type="ChEBI" id="CHEBI:29780"/>
        <dbReference type="ChEBI" id="CHEBI:58818"/>
        <dbReference type="EC" id="2.2.1.9"/>
    </reaction>
</comment>
<comment type="cofactor">
    <cofactor evidence="1">
        <name>Mg(2+)</name>
        <dbReference type="ChEBI" id="CHEBI:18420"/>
    </cofactor>
    <cofactor evidence="1">
        <name>Mn(2+)</name>
        <dbReference type="ChEBI" id="CHEBI:29035"/>
    </cofactor>
</comment>
<comment type="cofactor">
    <cofactor evidence="1">
        <name>thiamine diphosphate</name>
        <dbReference type="ChEBI" id="CHEBI:58937"/>
    </cofactor>
    <text evidence="1">Binds 1 thiamine pyrophosphate per subunit.</text>
</comment>
<comment type="pathway">
    <text evidence="1">Quinol/quinone metabolism; 1,4-dihydroxy-2-naphthoate biosynthesis; 1,4-dihydroxy-2-naphthoate from chorismate: step 2/7.</text>
</comment>
<comment type="pathway">
    <text evidence="1">Quinol/quinone metabolism; menaquinone biosynthesis.</text>
</comment>
<comment type="subunit">
    <text evidence="1">Homodimer.</text>
</comment>
<comment type="similarity">
    <text evidence="1">Belongs to the TPP enzyme family. MenD subfamily.</text>
</comment>
<accession>A8ADW9</accession>
<keyword id="KW-0460">Magnesium</keyword>
<keyword id="KW-0464">Manganese</keyword>
<keyword id="KW-0474">Menaquinone biosynthesis</keyword>
<keyword id="KW-0479">Metal-binding</keyword>
<keyword id="KW-1185">Reference proteome</keyword>
<keyword id="KW-0786">Thiamine pyrophosphate</keyword>
<keyword id="KW-0808">Transferase</keyword>
<reference key="1">
    <citation type="submission" date="2007-08" db="EMBL/GenBank/DDBJ databases">
        <authorList>
            <consortium name="The Citrobacter koseri Genome Sequencing Project"/>
            <person name="McClelland M."/>
            <person name="Sanderson E.K."/>
            <person name="Porwollik S."/>
            <person name="Spieth J."/>
            <person name="Clifton W.S."/>
            <person name="Latreille P."/>
            <person name="Courtney L."/>
            <person name="Wang C."/>
            <person name="Pepin K."/>
            <person name="Bhonagiri V."/>
            <person name="Nash W."/>
            <person name="Johnson M."/>
            <person name="Thiruvilangam P."/>
            <person name="Wilson R."/>
        </authorList>
    </citation>
    <scope>NUCLEOTIDE SEQUENCE [LARGE SCALE GENOMIC DNA]</scope>
    <source>
        <strain>ATCC BAA-895 / CDC 4225-83 / SGSC4696</strain>
    </source>
</reference>
<sequence>MSVSAFNRRWAAVILEALTRHGVRHVCIAPGSRSTPLTLAAAENSAFIHHTHFDERGLGHLALGLAKVSKQPVAVIVTSGTAVANLYPALIEAGLTGEKLILLTADRPPELIDCGANQAIRQAGMFASHPSQTLSLPRPTQDISARWLVSTLDNVLATLHAGAVHINCPFAEPLYGDMDDTGLAWQQSLGDWWQDDKPWLREARRLESDKQRDWFFWRQKRGVVVAGRMSAEEGKKVALWAQTLGWPLIGDVLSQTGQPLPCADLWLGNAKAVTELQQAQIVVQLGSSLTGKRLLQWQAACEPEEYWIIDNIEGRLDPAHHRGRRLVAKIADWLELHPAEKRHPWCVDIPRLAEQAWQAVAARRDMFGEAQLAHRIRDYLPEQGQLFVGNSLVVRLIDALSQLPAGYPVYSNRGASGIDGLISTAAGVQRASAKSTLAIVGDLSALYDLNALALLRQVSAPFVLIVVNNNGGQIFSLLPTPQSERERFYLMPQNVHFEHAAAMFNLKYHRPQSWDELDAALAGAWRTPTTTVIELVVNDTDGAQTLQQLLAQVSHL</sequence>
<dbReference type="EC" id="2.2.1.9" evidence="1"/>
<dbReference type="EMBL" id="CP000822">
    <property type="protein sequence ID" value="ABV11682.1"/>
    <property type="molecule type" value="Genomic_DNA"/>
</dbReference>
<dbReference type="RefSeq" id="WP_012131507.1">
    <property type="nucleotide sequence ID" value="NC_009792.1"/>
</dbReference>
<dbReference type="SMR" id="A8ADW9"/>
<dbReference type="STRING" id="290338.CKO_00526"/>
<dbReference type="GeneID" id="45134768"/>
<dbReference type="KEGG" id="cko:CKO_00526"/>
<dbReference type="HOGENOM" id="CLU_006051_3_0_6"/>
<dbReference type="OrthoDB" id="9791859at2"/>
<dbReference type="UniPathway" id="UPA00079"/>
<dbReference type="UniPathway" id="UPA01057">
    <property type="reaction ID" value="UER00164"/>
</dbReference>
<dbReference type="Proteomes" id="UP000008148">
    <property type="component" value="Chromosome"/>
</dbReference>
<dbReference type="GO" id="GO:0070204">
    <property type="term" value="F:2-succinyl-5-enolpyruvyl-6-hydroxy-3-cyclohexene-1-carboxylic-acid synthase activity"/>
    <property type="evidence" value="ECO:0007669"/>
    <property type="project" value="UniProtKB-UniRule"/>
</dbReference>
<dbReference type="GO" id="GO:0000287">
    <property type="term" value="F:magnesium ion binding"/>
    <property type="evidence" value="ECO:0007669"/>
    <property type="project" value="UniProtKB-UniRule"/>
</dbReference>
<dbReference type="GO" id="GO:0030145">
    <property type="term" value="F:manganese ion binding"/>
    <property type="evidence" value="ECO:0007669"/>
    <property type="project" value="UniProtKB-UniRule"/>
</dbReference>
<dbReference type="GO" id="GO:0030976">
    <property type="term" value="F:thiamine pyrophosphate binding"/>
    <property type="evidence" value="ECO:0007669"/>
    <property type="project" value="UniProtKB-UniRule"/>
</dbReference>
<dbReference type="GO" id="GO:0009234">
    <property type="term" value="P:menaquinone biosynthetic process"/>
    <property type="evidence" value="ECO:0007669"/>
    <property type="project" value="UniProtKB-UniRule"/>
</dbReference>
<dbReference type="CDD" id="cd07037">
    <property type="entry name" value="TPP_PYR_MenD"/>
    <property type="match status" value="1"/>
</dbReference>
<dbReference type="CDD" id="cd02009">
    <property type="entry name" value="TPP_SHCHC_synthase"/>
    <property type="match status" value="1"/>
</dbReference>
<dbReference type="FunFam" id="3.40.50.1220:FF:000010">
    <property type="entry name" value="2-succinyl-5-enolpyruvyl-6-hydroxy-3-cyclohexene-1-carboxylate synthase"/>
    <property type="match status" value="1"/>
</dbReference>
<dbReference type="FunFam" id="3.40.50.970:FF:000029">
    <property type="entry name" value="2-succinyl-5-enolpyruvyl-6-hydroxy-3-cyclohexene-1-carboxylate synthase"/>
    <property type="match status" value="1"/>
</dbReference>
<dbReference type="Gene3D" id="3.40.50.970">
    <property type="match status" value="2"/>
</dbReference>
<dbReference type="Gene3D" id="3.40.50.1220">
    <property type="entry name" value="TPP-binding domain"/>
    <property type="match status" value="1"/>
</dbReference>
<dbReference type="HAMAP" id="MF_01659">
    <property type="entry name" value="MenD"/>
    <property type="match status" value="1"/>
</dbReference>
<dbReference type="InterPro" id="IPR004433">
    <property type="entry name" value="MenaQ_synth_MenD"/>
</dbReference>
<dbReference type="InterPro" id="IPR032264">
    <property type="entry name" value="MenD_middle"/>
</dbReference>
<dbReference type="InterPro" id="IPR029061">
    <property type="entry name" value="THDP-binding"/>
</dbReference>
<dbReference type="InterPro" id="IPR012001">
    <property type="entry name" value="Thiamin_PyroP_enz_TPP-bd_dom"/>
</dbReference>
<dbReference type="InterPro" id="IPR011766">
    <property type="entry name" value="TPP_enzyme_TPP-bd"/>
</dbReference>
<dbReference type="NCBIfam" id="TIGR00173">
    <property type="entry name" value="menD"/>
    <property type="match status" value="1"/>
</dbReference>
<dbReference type="PANTHER" id="PTHR42916">
    <property type="entry name" value="2-SUCCINYL-5-ENOLPYRUVYL-6-HYDROXY-3-CYCLOHEXENE-1-CARBOXYLATE SYNTHASE"/>
    <property type="match status" value="1"/>
</dbReference>
<dbReference type="PANTHER" id="PTHR42916:SF1">
    <property type="entry name" value="PROTEIN PHYLLO, CHLOROPLASTIC"/>
    <property type="match status" value="1"/>
</dbReference>
<dbReference type="Pfam" id="PF02775">
    <property type="entry name" value="TPP_enzyme_C"/>
    <property type="match status" value="1"/>
</dbReference>
<dbReference type="Pfam" id="PF16582">
    <property type="entry name" value="TPP_enzyme_M_2"/>
    <property type="match status" value="1"/>
</dbReference>
<dbReference type="Pfam" id="PF02776">
    <property type="entry name" value="TPP_enzyme_N"/>
    <property type="match status" value="1"/>
</dbReference>
<dbReference type="PIRSF" id="PIRSF004983">
    <property type="entry name" value="MenD"/>
    <property type="match status" value="1"/>
</dbReference>
<dbReference type="SUPFAM" id="SSF52518">
    <property type="entry name" value="Thiamin diphosphate-binding fold (THDP-binding)"/>
    <property type="match status" value="2"/>
</dbReference>
<evidence type="ECO:0000255" key="1">
    <source>
        <dbReference type="HAMAP-Rule" id="MF_01659"/>
    </source>
</evidence>
<protein>
    <recommendedName>
        <fullName evidence="1">2-succinyl-5-enolpyruvyl-6-hydroxy-3-cyclohexene-1-carboxylate synthase</fullName>
        <shortName evidence="1">SEPHCHC synthase</shortName>
        <ecNumber evidence="1">2.2.1.9</ecNumber>
    </recommendedName>
    <alternativeName>
        <fullName evidence="1">Menaquinone biosynthesis protein MenD</fullName>
    </alternativeName>
</protein>
<gene>
    <name evidence="1" type="primary">menD</name>
    <name type="ordered locus">CKO_00526</name>
</gene>
<proteinExistence type="inferred from homology"/>
<feature type="chain" id="PRO_0000341723" description="2-succinyl-5-enolpyruvyl-6-hydroxy-3-cyclohexene-1-carboxylate synthase">
    <location>
        <begin position="1"/>
        <end position="556"/>
    </location>
</feature>
<name>MEND_CITK8</name>
<organism>
    <name type="scientific">Citrobacter koseri (strain ATCC BAA-895 / CDC 4225-83 / SGSC4696)</name>
    <dbReference type="NCBI Taxonomy" id="290338"/>
    <lineage>
        <taxon>Bacteria</taxon>
        <taxon>Pseudomonadati</taxon>
        <taxon>Pseudomonadota</taxon>
        <taxon>Gammaproteobacteria</taxon>
        <taxon>Enterobacterales</taxon>
        <taxon>Enterobacteriaceae</taxon>
        <taxon>Citrobacter</taxon>
    </lineage>
</organism>